<sequence length="9" mass="907">SGPGFMGVR</sequence>
<proteinExistence type="evidence at protein level"/>
<organism>
    <name type="scientific">Rhodnius prolixus</name>
    <name type="common">Triatomid bug</name>
    <dbReference type="NCBI Taxonomy" id="13249"/>
    <lineage>
        <taxon>Eukaryota</taxon>
        <taxon>Metazoa</taxon>
        <taxon>Ecdysozoa</taxon>
        <taxon>Arthropoda</taxon>
        <taxon>Hexapoda</taxon>
        <taxon>Insecta</taxon>
        <taxon>Pterygota</taxon>
        <taxon>Neoptera</taxon>
        <taxon>Paraneoptera</taxon>
        <taxon>Hemiptera</taxon>
        <taxon>Heteroptera</taxon>
        <taxon>Panheteroptera</taxon>
        <taxon>Cimicomorpha</taxon>
        <taxon>Reduviidae</taxon>
        <taxon>Triatominae</taxon>
        <taxon>Rhodnius</taxon>
    </lineage>
</organism>
<dbReference type="InParanoid" id="P85802"/>
<dbReference type="Proteomes" id="UP000015103">
    <property type="component" value="Unassembled WGS sequence"/>
</dbReference>
<dbReference type="GO" id="GO:0005576">
    <property type="term" value="C:extracellular region"/>
    <property type="evidence" value="ECO:0007669"/>
    <property type="project" value="UniProtKB-SubCell"/>
</dbReference>
<dbReference type="GO" id="GO:0007218">
    <property type="term" value="P:neuropeptide signaling pathway"/>
    <property type="evidence" value="ECO:0007669"/>
    <property type="project" value="UniProtKB-KW"/>
</dbReference>
<protein>
    <recommendedName>
        <fullName evidence="2">Tachykinin-related peptide 1</fullName>
        <shortName evidence="2">Rhopr-TRP-1</shortName>
    </recommendedName>
</protein>
<keyword id="KW-0027">Amidation</keyword>
<keyword id="KW-0903">Direct protein sequencing</keyword>
<keyword id="KW-0527">Neuropeptide</keyword>
<keyword id="KW-1185">Reference proteome</keyword>
<keyword id="KW-0964">Secreted</keyword>
<evidence type="ECO:0000269" key="1">
    <source>
    </source>
</evidence>
<evidence type="ECO:0000303" key="2">
    <source>
    </source>
</evidence>
<evidence type="ECO:0000305" key="3"/>
<accession>P85802</accession>
<reference evidence="3" key="1">
    <citation type="journal article" date="2009" name="Proteomics">
        <title>The neuropeptidome of Rhodnius prolixus brain.</title>
        <authorList>
            <person name="Ons S."/>
            <person name="Richter F."/>
            <person name="Urlaub H."/>
            <person name="Pomar R.R."/>
        </authorList>
    </citation>
    <scope>PROTEIN SEQUENCE</scope>
    <scope>MASS SPECTROMETRY</scope>
    <scope>AMIDATION AT ARG-9</scope>
    <source>
        <tissue evidence="1">Brain</tissue>
    </source>
</reference>
<comment type="function">
    <text evidence="3">Myoactive peptide. Increases the amplitude and frequency of spontaneous contractions and tonus of hindgut muscle.</text>
</comment>
<comment type="subcellular location">
    <subcellularLocation>
        <location evidence="3">Secreted</location>
    </subcellularLocation>
</comment>
<comment type="mass spectrometry" mass="906.45" method="MALDI" evidence="1"/>
<name>TRP1_RHOPR</name>
<feature type="peptide" id="PRO_0000365750" description="Tachykinin-related peptide 1" evidence="1">
    <location>
        <begin position="1"/>
        <end position="9"/>
    </location>
</feature>
<feature type="modified residue" description="Arginine amide" evidence="1">
    <location>
        <position position="9"/>
    </location>
</feature>